<proteinExistence type="inferred from homology"/>
<gene>
    <name evidence="1" type="primary">nhaA</name>
    <name type="ordered locus">Dhaf_3397</name>
</gene>
<name>NHAA_DESHD</name>
<dbReference type="EMBL" id="CP001336">
    <property type="protein sequence ID" value="ACL21415.1"/>
    <property type="molecule type" value="Genomic_DNA"/>
</dbReference>
<dbReference type="RefSeq" id="WP_005811106.1">
    <property type="nucleotide sequence ID" value="NC_011830.1"/>
</dbReference>
<dbReference type="SMR" id="B8FPI3"/>
<dbReference type="KEGG" id="dhd:Dhaf_3397"/>
<dbReference type="HOGENOM" id="CLU_015803_1_2_9"/>
<dbReference type="Proteomes" id="UP000007726">
    <property type="component" value="Chromosome"/>
</dbReference>
<dbReference type="GO" id="GO:0005886">
    <property type="term" value="C:plasma membrane"/>
    <property type="evidence" value="ECO:0007669"/>
    <property type="project" value="UniProtKB-SubCell"/>
</dbReference>
<dbReference type="GO" id="GO:0015385">
    <property type="term" value="F:sodium:proton antiporter activity"/>
    <property type="evidence" value="ECO:0007669"/>
    <property type="project" value="TreeGrafter"/>
</dbReference>
<dbReference type="GO" id="GO:0006885">
    <property type="term" value="P:regulation of pH"/>
    <property type="evidence" value="ECO:0007669"/>
    <property type="project" value="InterPro"/>
</dbReference>
<dbReference type="Gene3D" id="1.20.1530.10">
    <property type="entry name" value="Na+/H+ antiporter like domain"/>
    <property type="match status" value="1"/>
</dbReference>
<dbReference type="HAMAP" id="MF_01844">
    <property type="entry name" value="NhaA"/>
    <property type="match status" value="1"/>
</dbReference>
<dbReference type="InterPro" id="IPR023171">
    <property type="entry name" value="Na/H_antiporter_dom_sf"/>
</dbReference>
<dbReference type="InterPro" id="IPR004670">
    <property type="entry name" value="NhaA"/>
</dbReference>
<dbReference type="PANTHER" id="PTHR30341:SF0">
    <property type="entry name" value="NA(+)_H(+) ANTIPORTER NHAA"/>
    <property type="match status" value="1"/>
</dbReference>
<dbReference type="PANTHER" id="PTHR30341">
    <property type="entry name" value="SODIUM ION/PROTON ANTIPORTER NHAA-RELATED"/>
    <property type="match status" value="1"/>
</dbReference>
<dbReference type="Pfam" id="PF06965">
    <property type="entry name" value="Na_H_antiport_1"/>
    <property type="match status" value="1"/>
</dbReference>
<protein>
    <recommendedName>
        <fullName evidence="1">Na(+)/H(+) antiporter NhaA</fullName>
    </recommendedName>
    <alternativeName>
        <fullName evidence="1">Sodium/proton antiporter NhaA</fullName>
    </alternativeName>
</protein>
<feature type="chain" id="PRO_1000188433" description="Na(+)/H(+) antiporter NhaA">
    <location>
        <begin position="1"/>
        <end position="389"/>
    </location>
</feature>
<feature type="transmembrane region" description="Helical" evidence="1">
    <location>
        <begin position="8"/>
        <end position="28"/>
    </location>
</feature>
<feature type="transmembrane region" description="Helical" evidence="1">
    <location>
        <begin position="48"/>
        <end position="68"/>
    </location>
</feature>
<feature type="transmembrane region" description="Helical" evidence="1">
    <location>
        <begin position="91"/>
        <end position="111"/>
    </location>
</feature>
<feature type="transmembrane region" description="Helical" evidence="1">
    <location>
        <begin position="119"/>
        <end position="139"/>
    </location>
</feature>
<feature type="transmembrane region" description="Helical" evidence="1">
    <location>
        <begin position="173"/>
        <end position="193"/>
    </location>
</feature>
<feature type="transmembrane region" description="Helical" evidence="1">
    <location>
        <begin position="214"/>
        <end position="234"/>
    </location>
</feature>
<feature type="transmembrane region" description="Helical" evidence="1">
    <location>
        <begin position="262"/>
        <end position="282"/>
    </location>
</feature>
<feature type="transmembrane region" description="Helical" evidence="1">
    <location>
        <begin position="288"/>
        <end position="308"/>
    </location>
</feature>
<feature type="transmembrane region" description="Helical" evidence="1">
    <location>
        <begin position="327"/>
        <end position="347"/>
    </location>
</feature>
<feature type="transmembrane region" description="Helical" evidence="1">
    <location>
        <begin position="361"/>
        <end position="381"/>
    </location>
</feature>
<organism>
    <name type="scientific">Desulfitobacterium hafniense (strain DSM 10664 / DCB-2)</name>
    <dbReference type="NCBI Taxonomy" id="272564"/>
    <lineage>
        <taxon>Bacteria</taxon>
        <taxon>Bacillati</taxon>
        <taxon>Bacillota</taxon>
        <taxon>Clostridia</taxon>
        <taxon>Eubacteriales</taxon>
        <taxon>Desulfitobacteriaceae</taxon>
        <taxon>Desulfitobacterium</taxon>
    </lineage>
</organism>
<reference key="1">
    <citation type="journal article" date="2012" name="BMC Microbiol.">
        <title>Genome sequence of Desulfitobacterium hafniense DCB-2, a Gram-positive anaerobe capable of dehalogenation and metal reduction.</title>
        <authorList>
            <person name="Kim S.H."/>
            <person name="Harzman C."/>
            <person name="Davis J.K."/>
            <person name="Hutcheson R."/>
            <person name="Broderick J.B."/>
            <person name="Marsh T.L."/>
            <person name="Tiedje J.M."/>
        </authorList>
    </citation>
    <scope>NUCLEOTIDE SEQUENCE [LARGE SCALE GENOMIC DNA]</scope>
    <source>
        <strain>DSM 10664 / DCB-2</strain>
    </source>
</reference>
<keyword id="KW-0050">Antiport</keyword>
<keyword id="KW-1003">Cell membrane</keyword>
<keyword id="KW-0406">Ion transport</keyword>
<keyword id="KW-0472">Membrane</keyword>
<keyword id="KW-0915">Sodium</keyword>
<keyword id="KW-0739">Sodium transport</keyword>
<keyword id="KW-0812">Transmembrane</keyword>
<keyword id="KW-1133">Transmembrane helix</keyword>
<keyword id="KW-0813">Transport</keyword>
<comment type="function">
    <text evidence="1">Na(+)/H(+) antiporter that extrudes sodium in exchange for external protons.</text>
</comment>
<comment type="catalytic activity">
    <reaction evidence="1">
        <text>Na(+)(in) + 2 H(+)(out) = Na(+)(out) + 2 H(+)(in)</text>
        <dbReference type="Rhea" id="RHEA:29251"/>
        <dbReference type="ChEBI" id="CHEBI:15378"/>
        <dbReference type="ChEBI" id="CHEBI:29101"/>
    </reaction>
    <physiologicalReaction direction="left-to-right" evidence="1">
        <dbReference type="Rhea" id="RHEA:29252"/>
    </physiologicalReaction>
</comment>
<comment type="subcellular location">
    <subcellularLocation>
        <location evidence="1">Cell membrane</location>
        <topology evidence="1">Multi-pass membrane protein</topology>
    </subcellularLocation>
</comment>
<comment type="similarity">
    <text evidence="1">Belongs to the NhaA Na(+)/H(+) (TC 2.A.33) antiporter family.</text>
</comment>
<evidence type="ECO:0000255" key="1">
    <source>
        <dbReference type="HAMAP-Rule" id="MF_01844"/>
    </source>
</evidence>
<sequence length="389" mass="41969">MSTQKKTINFLQEFSIPLILGVLIALVWANLAPENYHHFVHNEIIGHISLHFFVNDIFMVFFFAMAAIEITQSLLPGGSLNPLKRAINPLMATLGGVLGPALVFLGLNALIGSPEFARGWGIPTATDIALAWLVARVVFGAQHAAVSFLLLLAIVDDGIGLMIIAFFYPDPANPVAPLWLLLTVAGMLVAYLLRRKNVQSYWPYIILGGILSWAGLYLAHIHPALALVFIVPFLPHPPREEFGLFEDDPQDHSTLKTFEHEWKIFVDFGLLLFGLTNAGVEFSEINTLTWLVLIALVGGKTIGIFLMGSLATVIGFPFPKGMGYKELLVAGVIAAMGLTVALFVSGVAFIDPGLQGAAKMGALFSAVAAVIAFALGKVLGIKKVKDTQA</sequence>
<accession>B8FPI3</accession>